<protein>
    <recommendedName>
        <fullName evidence="5">Pi-stichotoxin-Hcr5d</fullName>
        <shortName evidence="8">Pi-SHTX-Hcr5d</shortName>
    </recommendedName>
    <alternativeName>
        <fullName evidence="6">APETx-like peptide</fullName>
    </alternativeName>
    <alternativeName>
        <fullName evidence="5 6">Hcr 1b-4</fullName>
    </alternativeName>
</protein>
<feature type="peptide" id="PRO_0000444939" description="Pi-stichotoxin-Hcr5d" evidence="3">
    <location>
        <begin position="1"/>
        <end position="41"/>
    </location>
</feature>
<feature type="disulfide bond" evidence="2">
    <location>
        <begin position="4"/>
        <end position="37"/>
    </location>
</feature>
<feature type="disulfide bond" evidence="2">
    <location>
        <begin position="6"/>
        <end position="30"/>
    </location>
</feature>
<feature type="disulfide bond" evidence="2">
    <location>
        <begin position="20"/>
        <end position="38"/>
    </location>
</feature>
<name>BDSB4_RADCR</name>
<dbReference type="SMR" id="C0HL54"/>
<dbReference type="GO" id="GO:0005576">
    <property type="term" value="C:extracellular region"/>
    <property type="evidence" value="ECO:0007669"/>
    <property type="project" value="UniProtKB-SubCell"/>
</dbReference>
<dbReference type="GO" id="GO:0042151">
    <property type="term" value="C:nematocyst"/>
    <property type="evidence" value="ECO:0007669"/>
    <property type="project" value="UniProtKB-SubCell"/>
</dbReference>
<dbReference type="GO" id="GO:0008200">
    <property type="term" value="F:ion channel inhibitor activity"/>
    <property type="evidence" value="ECO:0007669"/>
    <property type="project" value="InterPro"/>
</dbReference>
<dbReference type="GO" id="GO:0090729">
    <property type="term" value="F:toxin activity"/>
    <property type="evidence" value="ECO:0007669"/>
    <property type="project" value="UniProtKB-KW"/>
</dbReference>
<dbReference type="Gene3D" id="2.20.20.10">
    <property type="entry name" value="Anthopleurin-A"/>
    <property type="match status" value="1"/>
</dbReference>
<dbReference type="InterPro" id="IPR012414">
    <property type="entry name" value="BDS_K_chnl_tox"/>
</dbReference>
<dbReference type="InterPro" id="IPR023355">
    <property type="entry name" value="Myo_ane_neurotoxin_sf"/>
</dbReference>
<dbReference type="Pfam" id="PF07936">
    <property type="entry name" value="Defensin_4"/>
    <property type="match status" value="1"/>
</dbReference>
<dbReference type="SUPFAM" id="SSF57392">
    <property type="entry name" value="Defensin-like"/>
    <property type="match status" value="1"/>
</dbReference>
<sequence length="41" mass="4703">GTPCDCYGYTGVYWFMLSRCPSGYGYNLSCHYFMGICCVKR</sequence>
<accession>C0HL54</accession>
<organism>
    <name type="scientific">Radianthus crispa</name>
    <name type="common">Leathery sea anemone</name>
    <name type="synonym">Heteractis crispa</name>
    <dbReference type="NCBI Taxonomy" id="3122430"/>
    <lineage>
        <taxon>Eukaryota</taxon>
        <taxon>Metazoa</taxon>
        <taxon>Cnidaria</taxon>
        <taxon>Anthozoa</taxon>
        <taxon>Hexacorallia</taxon>
        <taxon>Actiniaria</taxon>
        <taxon>Stichodactylidae</taxon>
        <taxon>Radianthus</taxon>
    </lineage>
</organism>
<evidence type="ECO:0000250" key="1">
    <source>
        <dbReference type="UniProtKB" id="P0DRI4"/>
    </source>
</evidence>
<evidence type="ECO:0000250" key="2">
    <source>
        <dbReference type="UniProtKB" id="P61541"/>
    </source>
</evidence>
<evidence type="ECO:0000269" key="3">
    <source>
    </source>
</evidence>
<evidence type="ECO:0000269" key="4">
    <source>
    </source>
</evidence>
<evidence type="ECO:0000303" key="5">
    <source>
    </source>
</evidence>
<evidence type="ECO:0000303" key="6">
    <source>
    </source>
</evidence>
<evidence type="ECO:0000305" key="7"/>
<evidence type="ECO:0000305" key="8">
    <source>
    </source>
</evidence>
<comment type="function">
    <text evidence="1 3 4">Toxin with different activities on acid-sensing ion channels (ASIC) and nicotinic acetylcholine receptors (By similarity) (PubMed:32326130). Is able to bind T.californica muscle-type nicotinic acetylcholine receptors (nAChR) (alpha-1-beta-1-delta-epsilon (CHRNA1-CHRNB1-CHRND-CHRNE)), and human alpha-7/CHRNA7 nicotinic acetylcholine receptors (By similarity). Weakly and reversibly inhibits rat homomeric ASIC1 (isoform ASIC1a) (IC(50)=1.25 uM), while it potentiates rat homomeric ASIC3 (EC(50)=1.53 uM) (By similarity) (PubMed:29684594, PubMed:32326130). Rat ASIC1a current inhibition is not complete, and reaches a maximum of 86% inhibition (PubMed:32326130). On rat ASIC3, does not activate the channel itself, but produces a remarkable potentiation of the transient current resulting from the acidic pulse (PubMed:32326130). At the maximal applied concentration, it elicits responses that are twice as high as those produced by extracellular protons (PubMed:32326130). Surprisingly, shows a different activity on human ASIC3. On the truncated human ASIC3 (ASIC3-D20), the toxin weakly inhibits the channel (By similarity). Molecular modeling interaction with rat ASIC1a suggests that it hinders the collapse of acidic pockets and stabilizes nonconducting channels state (PubMed:32326130). In vivo, causes an anxiolytic effect on mouse behavior (By similarity). Also shows an analgesic activity in an acid-induced muscle pain model, and important anti-inflammatory effect in models of acute local inflammation (By similarity).</text>
</comment>
<comment type="subcellular location">
    <subcellularLocation>
        <location evidence="3">Secreted</location>
    </subcellularLocation>
    <subcellularLocation>
        <location evidence="7">Nematocyst</location>
    </subcellularLocation>
</comment>
<comment type="mass spectrometry" mass="4693.91" method="MALDI" evidence="3">
    <text>Monoisotopic mass.</text>
</comment>
<comment type="miscellaneous">
    <text evidence="7">A synonymy between H.magnifica and R.crispa is controversial.</text>
</comment>
<comment type="miscellaneous">
    <text evidence="7">The primary structure of this peptide is identical to Hmg 1b-4 from Heteractis magnifica (AC P0DRI4).</text>
</comment>
<comment type="similarity">
    <text evidence="7">Belongs to the sea anemone type 3 (BDS) potassium channel toxin family.</text>
</comment>
<proteinExistence type="evidence at protein level"/>
<keyword id="KW-0008">Acetylcholine receptor inhibiting toxin</keyword>
<keyword id="KW-0903">Direct protein sequencing</keyword>
<keyword id="KW-1015">Disulfide bond</keyword>
<keyword id="KW-0872">Ion channel impairing toxin</keyword>
<keyword id="KW-0166">Nematocyst</keyword>
<keyword id="KW-0528">Neurotoxin</keyword>
<keyword id="KW-0629">Postsynaptic neurotoxin</keyword>
<keyword id="KW-1275">Proton-gated sodium channel impairing toxin</keyword>
<keyword id="KW-0964">Secreted</keyword>
<keyword id="KW-0800">Toxin</keyword>
<reference key="1">
    <citation type="journal article" date="2018" name="Peptides">
        <title>New APETx-like peptides from sea anemone Heteractis crispa modulate ASIC1a channels.</title>
        <authorList>
            <person name="Kalina R."/>
            <person name="Gladkikh I."/>
            <person name="Dmitrenok P."/>
            <person name="Chernikov O."/>
            <person name="Koshelev S."/>
            <person name="Kvetkina A."/>
            <person name="Kozlov S."/>
            <person name="Kozlovskaya E."/>
            <person name="Monastyrnaya M."/>
        </authorList>
    </citation>
    <scope>PROTEIN SEQUENCE</scope>
    <scope>FUNCTION</scope>
    <scope>MASS SPECTROMETRY</scope>
    <scope>SUBCELLULAR LOCATION</scope>
</reference>
<reference key="2">
    <citation type="journal article" date="2020" name="Toxins">
        <title>APETx-Like peptides from the sea anemone Heteractis crispa, diverse in their effect on ASIC1a and ASIC3 ion channels.</title>
        <authorList>
            <person name="Kalina R.S."/>
            <person name="Koshelev S.G."/>
            <person name="Zelepuga E.A."/>
            <person name="Kim N.Y."/>
            <person name="Kozlov S.A."/>
            <person name="Kozlovskaya E.P."/>
            <person name="Monastyrnaya M.M."/>
            <person name="Gladkikh I.N."/>
        </authorList>
    </citation>
    <scope>FUNCTION</scope>
    <scope>3D-STRUCTURE MODELING IN COMPLEX WITH RAT ASIC1A</scope>
</reference>